<protein>
    <recommendedName>
        <fullName evidence="1">Ribonuclease Y</fullName>
        <shortName evidence="1">RNase Y</shortName>
        <ecNumber evidence="1">3.1.-.-</ecNumber>
    </recommendedName>
</protein>
<accession>A8L6J3</accession>
<dbReference type="EC" id="3.1.-.-" evidence="1"/>
<dbReference type="EMBL" id="CP000820">
    <property type="protein sequence ID" value="ABW10675.1"/>
    <property type="molecule type" value="Genomic_DNA"/>
</dbReference>
<dbReference type="SMR" id="A8L6J3"/>
<dbReference type="STRING" id="298653.Franean1_1221"/>
<dbReference type="KEGG" id="fre:Franean1_1221"/>
<dbReference type="eggNOG" id="COG1418">
    <property type="taxonomic scope" value="Bacteria"/>
</dbReference>
<dbReference type="HOGENOM" id="CLU_028328_1_0_11"/>
<dbReference type="GO" id="GO:0005886">
    <property type="term" value="C:plasma membrane"/>
    <property type="evidence" value="ECO:0007669"/>
    <property type="project" value="UniProtKB-UniRule"/>
</dbReference>
<dbReference type="GO" id="GO:0003723">
    <property type="term" value="F:RNA binding"/>
    <property type="evidence" value="ECO:0007669"/>
    <property type="project" value="UniProtKB-UniRule"/>
</dbReference>
<dbReference type="GO" id="GO:0004521">
    <property type="term" value="F:RNA endonuclease activity"/>
    <property type="evidence" value="ECO:0007669"/>
    <property type="project" value="UniProtKB-UniRule"/>
</dbReference>
<dbReference type="GO" id="GO:0006402">
    <property type="term" value="P:mRNA catabolic process"/>
    <property type="evidence" value="ECO:0007669"/>
    <property type="project" value="UniProtKB-UniRule"/>
</dbReference>
<dbReference type="CDD" id="cd00077">
    <property type="entry name" value="HDc"/>
    <property type="match status" value="1"/>
</dbReference>
<dbReference type="CDD" id="cd22431">
    <property type="entry name" value="KH-I_RNaseY"/>
    <property type="match status" value="1"/>
</dbReference>
<dbReference type="Gene3D" id="1.10.3210.10">
    <property type="entry name" value="Hypothetical protein af1432"/>
    <property type="match status" value="1"/>
</dbReference>
<dbReference type="HAMAP" id="MF_00335">
    <property type="entry name" value="RNase_Y"/>
    <property type="match status" value="1"/>
</dbReference>
<dbReference type="InterPro" id="IPR003607">
    <property type="entry name" value="HD/PDEase_dom"/>
</dbReference>
<dbReference type="InterPro" id="IPR006674">
    <property type="entry name" value="HD_domain"/>
</dbReference>
<dbReference type="InterPro" id="IPR006675">
    <property type="entry name" value="HDIG_dom"/>
</dbReference>
<dbReference type="InterPro" id="IPR004087">
    <property type="entry name" value="KH_dom"/>
</dbReference>
<dbReference type="InterPro" id="IPR004088">
    <property type="entry name" value="KH_dom_type_1"/>
</dbReference>
<dbReference type="InterPro" id="IPR036612">
    <property type="entry name" value="KH_dom_type_1_sf"/>
</dbReference>
<dbReference type="InterPro" id="IPR017705">
    <property type="entry name" value="Ribonuclease_Y"/>
</dbReference>
<dbReference type="InterPro" id="IPR022711">
    <property type="entry name" value="RNase_Y_N"/>
</dbReference>
<dbReference type="NCBIfam" id="TIGR00277">
    <property type="entry name" value="HDIG"/>
    <property type="match status" value="1"/>
</dbReference>
<dbReference type="NCBIfam" id="TIGR03319">
    <property type="entry name" value="RNase_Y"/>
    <property type="match status" value="1"/>
</dbReference>
<dbReference type="PANTHER" id="PTHR12826">
    <property type="entry name" value="RIBONUCLEASE Y"/>
    <property type="match status" value="1"/>
</dbReference>
<dbReference type="PANTHER" id="PTHR12826:SF15">
    <property type="entry name" value="RIBONUCLEASE Y"/>
    <property type="match status" value="1"/>
</dbReference>
<dbReference type="Pfam" id="PF01966">
    <property type="entry name" value="HD"/>
    <property type="match status" value="1"/>
</dbReference>
<dbReference type="Pfam" id="PF00013">
    <property type="entry name" value="KH_1"/>
    <property type="match status" value="1"/>
</dbReference>
<dbReference type="Pfam" id="PF12072">
    <property type="entry name" value="RNase_Y_N"/>
    <property type="match status" value="1"/>
</dbReference>
<dbReference type="SMART" id="SM00471">
    <property type="entry name" value="HDc"/>
    <property type="match status" value="1"/>
</dbReference>
<dbReference type="SMART" id="SM00322">
    <property type="entry name" value="KH"/>
    <property type="match status" value="1"/>
</dbReference>
<dbReference type="SUPFAM" id="SSF54791">
    <property type="entry name" value="Eukaryotic type KH-domain (KH-domain type I)"/>
    <property type="match status" value="1"/>
</dbReference>
<dbReference type="SUPFAM" id="SSF109604">
    <property type="entry name" value="HD-domain/PDEase-like"/>
    <property type="match status" value="1"/>
</dbReference>
<dbReference type="PROSITE" id="PS51831">
    <property type="entry name" value="HD"/>
    <property type="match status" value="1"/>
</dbReference>
<dbReference type="PROSITE" id="PS50084">
    <property type="entry name" value="KH_TYPE_1"/>
    <property type="match status" value="1"/>
</dbReference>
<proteinExistence type="inferred from homology"/>
<feature type="chain" id="PRO_0000344878" description="Ribonuclease Y">
    <location>
        <begin position="1"/>
        <end position="533"/>
    </location>
</feature>
<feature type="domain" description="KH" evidence="1">
    <location>
        <begin position="223"/>
        <end position="289"/>
    </location>
</feature>
<feature type="domain" description="HD" evidence="2">
    <location>
        <begin position="349"/>
        <end position="442"/>
    </location>
</feature>
<feature type="region of interest" description="Disordered" evidence="3">
    <location>
        <begin position="16"/>
        <end position="41"/>
    </location>
</feature>
<feature type="compositionally biased region" description="Basic and acidic residues" evidence="3">
    <location>
        <begin position="22"/>
        <end position="41"/>
    </location>
</feature>
<organism>
    <name type="scientific">Parafrankia sp. (strain EAN1pec)</name>
    <dbReference type="NCBI Taxonomy" id="298653"/>
    <lineage>
        <taxon>Bacteria</taxon>
        <taxon>Bacillati</taxon>
        <taxon>Actinomycetota</taxon>
        <taxon>Actinomycetes</taxon>
        <taxon>Frankiales</taxon>
        <taxon>Frankiaceae</taxon>
        <taxon>Parafrankia</taxon>
    </lineage>
</organism>
<keyword id="KW-0255">Endonuclease</keyword>
<keyword id="KW-0378">Hydrolase</keyword>
<keyword id="KW-0540">Nuclease</keyword>
<keyword id="KW-0694">RNA-binding</keyword>
<sequence>MVADLRREARDVEEEVERIRRRAEQDAAEQTERVRREAEQIRRHAEEAAEAIRERAVADAELRASRAEAAARDAIHAEREQIRAELDEDLRTQRTELRGWDSRLTQREQRVTDQAASVEERLRRLETREAELAVREAGLDSRESDLGELEEARRRELERVAGLTSAEARTELVKVVEDQARLDAAVRVRDIEARAEEEAEDRARRIVTLAIQRVASDQTAESVVSVLHLPSDEMKGRIIGREGRNIRAFESVTGVNVLIDDTPEAVLLSCFDPVRREMGRITLTALVSDGRIHPHRIEEEYARAEREVAAKCVRAGEDALIDVGIAEMHPELINLLGRLRYRTSYGQNVLAHLVESAHLAGIMAAELRLPPAIAKRGTLLHDLGKALTHEVEGSHAIVGAEIARRYGEHEDVVHAIEAHHNEVEPRSIGAVLTQAADQISGGRPGARRDSLESYVKRLERIEQIAAERPGVEKVFAMQAGREVRVMVVPELVDDVAAHLLARDVAKQIEDELTYPGQIRVTVVRETRAVGMAR</sequence>
<evidence type="ECO:0000255" key="1">
    <source>
        <dbReference type="HAMAP-Rule" id="MF_00335"/>
    </source>
</evidence>
<evidence type="ECO:0000255" key="2">
    <source>
        <dbReference type="PROSITE-ProRule" id="PRU01175"/>
    </source>
</evidence>
<evidence type="ECO:0000256" key="3">
    <source>
        <dbReference type="SAM" id="MobiDB-lite"/>
    </source>
</evidence>
<name>RNY_PARS2</name>
<gene>
    <name evidence="1" type="primary">rny</name>
    <name type="ordered locus">Franean1_1221</name>
</gene>
<reference key="1">
    <citation type="journal article" date="2007" name="Genome Res.">
        <title>Genome characteristics of facultatively symbiotic Frankia sp. strains reflect host range and host plant biogeography.</title>
        <authorList>
            <person name="Normand P."/>
            <person name="Lapierre P."/>
            <person name="Tisa L.S."/>
            <person name="Gogarten J.P."/>
            <person name="Alloisio N."/>
            <person name="Bagnarol E."/>
            <person name="Bassi C.A."/>
            <person name="Berry A.M."/>
            <person name="Bickhart D.M."/>
            <person name="Choisne N."/>
            <person name="Couloux A."/>
            <person name="Cournoyer B."/>
            <person name="Cruveiller S."/>
            <person name="Daubin V."/>
            <person name="Demange N."/>
            <person name="Francino M.P."/>
            <person name="Goltsman E."/>
            <person name="Huang Y."/>
            <person name="Kopp O.R."/>
            <person name="Labarre L."/>
            <person name="Lapidus A."/>
            <person name="Lavire C."/>
            <person name="Marechal J."/>
            <person name="Martinez M."/>
            <person name="Mastronunzio J.E."/>
            <person name="Mullin B.C."/>
            <person name="Niemann J."/>
            <person name="Pujic P."/>
            <person name="Rawnsley T."/>
            <person name="Rouy Z."/>
            <person name="Schenowitz C."/>
            <person name="Sellstedt A."/>
            <person name="Tavares F."/>
            <person name="Tomkins J.P."/>
            <person name="Vallenet D."/>
            <person name="Valverde C."/>
            <person name="Wall L.G."/>
            <person name="Wang Y."/>
            <person name="Medigue C."/>
            <person name="Benson D.R."/>
        </authorList>
    </citation>
    <scope>NUCLEOTIDE SEQUENCE [LARGE SCALE GENOMIC DNA]</scope>
    <source>
        <strain>EAN1pec</strain>
    </source>
</reference>
<comment type="function">
    <text evidence="1">Endoribonuclease that initiates mRNA decay.</text>
</comment>
<comment type="similarity">
    <text evidence="1">Belongs to the RNase Y family.</text>
</comment>